<keyword id="KW-0007">Acetylation</keyword>
<keyword id="KW-0025">Alternative splicing</keyword>
<keyword id="KW-0443">Lipid metabolism</keyword>
<keyword id="KW-0472">Membrane</keyword>
<keyword id="KW-0496">Mitochondrion</keyword>
<keyword id="KW-0999">Mitochondrion inner membrane</keyword>
<keyword id="KW-0521">NADP</keyword>
<keyword id="KW-0560">Oxidoreductase</keyword>
<keyword id="KW-0597">Phosphoprotein</keyword>
<keyword id="KW-1267">Proteomics identification</keyword>
<keyword id="KW-1185">Reference proteome</keyword>
<comment type="function">
    <text evidence="6">Retinol dehydrogenase with a clear preference for NADP. Oxidizes all-trans-retinol, but seems to reduce all-trans-retinal with much higher efficiency (PubMed:18039331). Has no activity toward steroids (PubMed:18039331).</text>
</comment>
<comment type="catalytic activity">
    <reaction evidence="6">
        <text>all-trans-retinol + NADP(+) = all-trans-retinal + NADPH + H(+)</text>
        <dbReference type="Rhea" id="RHEA:25033"/>
        <dbReference type="ChEBI" id="CHEBI:15378"/>
        <dbReference type="ChEBI" id="CHEBI:17336"/>
        <dbReference type="ChEBI" id="CHEBI:17898"/>
        <dbReference type="ChEBI" id="CHEBI:57783"/>
        <dbReference type="ChEBI" id="CHEBI:58349"/>
        <dbReference type="EC" id="1.1.1.300"/>
    </reaction>
</comment>
<comment type="biophysicochemical properties">
    <kinetics>
        <KM evidence="6">3.2 uM for all-trans-retinal</KM>
        <KM evidence="6">3 uM for all-trans-retinol</KM>
        <KM evidence="6">1.5 uM for NADPH</KM>
        <KM evidence="6">6000 uM for NAD</KM>
        <Vmax evidence="6">230.0 nmol/min/mg enzyme with all-trans-retinal as substrate</Vmax>
        <Vmax evidence="6">5.0 nmol/min/mg enzyme with all-trans-retinol as substrate</Vmax>
        <Vmax evidence="6">230.0 nmol/min/mg enzyme with NADPH as substrate</Vmax>
    </kinetics>
</comment>
<comment type="pathway">
    <text evidence="3">Cofactor metabolism; retinol metabolism.</text>
</comment>
<comment type="subcellular location">
    <subcellularLocation>
        <location evidence="6">Mitochondrion inner membrane</location>
        <topology evidence="6">Peripheral membrane protein</topology>
    </subcellularLocation>
    <text evidence="6">Localized on the outer side of the inner mitochondrial membrane.</text>
</comment>
<comment type="alternative products">
    <event type="alternative splicing"/>
    <isoform>
        <id>Q8NBN7-1</id>
        <name>1</name>
        <sequence type="displayed"/>
    </isoform>
    <isoform>
        <id>Q8NBN7-2</id>
        <name>2</name>
        <sequence type="described" ref="VSP_040383"/>
    </isoform>
</comment>
<comment type="tissue specificity">
    <text evidence="5 6">Widely expressed (PubMed:18039331). In the retina, detected in the inner segment of the photoreceptor cells. Weak signals are observed in a small population of inner nuclear neurons and the inner plexiform layer (PubMed:12226107).</text>
</comment>
<comment type="similarity">
    <text evidence="8">Belongs to the short-chain dehydrogenases/reductases (SDR) family.</text>
</comment>
<comment type="caution">
    <text evidence="5 6">Was originally thought to lack retinol dehydrogenase (RDH) activity. However, a more recent publication demonstrates a retinol dehydrogenase activity for RDH13.</text>
</comment>
<reference key="1">
    <citation type="journal article" date="2003" name="Genome Res.">
        <title>The secreted protein discovery initiative (SPDI), a large-scale effort to identify novel human secreted and transmembrane proteins: a bioinformatics assessment.</title>
        <authorList>
            <person name="Clark H.F."/>
            <person name="Gurney A.L."/>
            <person name="Abaya E."/>
            <person name="Baker K."/>
            <person name="Baldwin D.T."/>
            <person name="Brush J."/>
            <person name="Chen J."/>
            <person name="Chow B."/>
            <person name="Chui C."/>
            <person name="Crowley C."/>
            <person name="Currell B."/>
            <person name="Deuel B."/>
            <person name="Dowd P."/>
            <person name="Eaton D."/>
            <person name="Foster J.S."/>
            <person name="Grimaldi C."/>
            <person name="Gu Q."/>
            <person name="Hass P.E."/>
            <person name="Heldens S."/>
            <person name="Huang A."/>
            <person name="Kim H.S."/>
            <person name="Klimowski L."/>
            <person name="Jin Y."/>
            <person name="Johnson S."/>
            <person name="Lee J."/>
            <person name="Lewis L."/>
            <person name="Liao D."/>
            <person name="Mark M.R."/>
            <person name="Robbie E."/>
            <person name="Sanchez C."/>
            <person name="Schoenfeld J."/>
            <person name="Seshagiri S."/>
            <person name="Simmons L."/>
            <person name="Singh J."/>
            <person name="Smith V."/>
            <person name="Stinson J."/>
            <person name="Vagts A."/>
            <person name="Vandlen R.L."/>
            <person name="Watanabe C."/>
            <person name="Wieand D."/>
            <person name="Woods K."/>
            <person name="Xie M.-H."/>
            <person name="Yansura D.G."/>
            <person name="Yi S."/>
            <person name="Yu G."/>
            <person name="Yuan J."/>
            <person name="Zhang M."/>
            <person name="Zhang Z."/>
            <person name="Goddard A.D."/>
            <person name="Wood W.I."/>
            <person name="Godowski P.J."/>
            <person name="Gray A.M."/>
        </authorList>
    </citation>
    <scope>NUCLEOTIDE SEQUENCE [LARGE SCALE MRNA] (ISOFORM 1)</scope>
</reference>
<reference key="2">
    <citation type="journal article" date="2005" name="DNA Res.">
        <title>Signal sequence and keyword trap in silico for selection of full-length human cDNAs encoding secretion or membrane proteins from oligo-capped cDNA libraries.</title>
        <authorList>
            <person name="Otsuki T."/>
            <person name="Ota T."/>
            <person name="Nishikawa T."/>
            <person name="Hayashi K."/>
            <person name="Suzuki Y."/>
            <person name="Yamamoto J."/>
            <person name="Wakamatsu A."/>
            <person name="Kimura K."/>
            <person name="Sakamoto K."/>
            <person name="Hatano N."/>
            <person name="Kawai Y."/>
            <person name="Ishii S."/>
            <person name="Saito K."/>
            <person name="Kojima S."/>
            <person name="Sugiyama T."/>
            <person name="Ono T."/>
            <person name="Okano K."/>
            <person name="Yoshikawa Y."/>
            <person name="Aotsuka S."/>
            <person name="Sasaki N."/>
            <person name="Hattori A."/>
            <person name="Okumura K."/>
            <person name="Nagai K."/>
            <person name="Sugano S."/>
            <person name="Isogai T."/>
        </authorList>
    </citation>
    <scope>NUCLEOTIDE SEQUENCE [LARGE SCALE MRNA] (ISOFORM 1)</scope>
    <source>
        <tissue>Teratocarcinoma</tissue>
    </source>
</reference>
<reference key="3">
    <citation type="journal article" date="2004" name="Nature">
        <title>The DNA sequence and biology of human chromosome 19.</title>
        <authorList>
            <person name="Grimwood J."/>
            <person name="Gordon L.A."/>
            <person name="Olsen A.S."/>
            <person name="Terry A."/>
            <person name="Schmutz J."/>
            <person name="Lamerdin J.E."/>
            <person name="Hellsten U."/>
            <person name="Goodstein D."/>
            <person name="Couronne O."/>
            <person name="Tran-Gyamfi M."/>
            <person name="Aerts A."/>
            <person name="Altherr M."/>
            <person name="Ashworth L."/>
            <person name="Bajorek E."/>
            <person name="Black S."/>
            <person name="Branscomb E."/>
            <person name="Caenepeel S."/>
            <person name="Carrano A.V."/>
            <person name="Caoile C."/>
            <person name="Chan Y.M."/>
            <person name="Christensen M."/>
            <person name="Cleland C.A."/>
            <person name="Copeland A."/>
            <person name="Dalin E."/>
            <person name="Dehal P."/>
            <person name="Denys M."/>
            <person name="Detter J.C."/>
            <person name="Escobar J."/>
            <person name="Flowers D."/>
            <person name="Fotopulos D."/>
            <person name="Garcia C."/>
            <person name="Georgescu A.M."/>
            <person name="Glavina T."/>
            <person name="Gomez M."/>
            <person name="Gonzales E."/>
            <person name="Groza M."/>
            <person name="Hammon N."/>
            <person name="Hawkins T."/>
            <person name="Haydu L."/>
            <person name="Ho I."/>
            <person name="Huang W."/>
            <person name="Israni S."/>
            <person name="Jett J."/>
            <person name="Kadner K."/>
            <person name="Kimball H."/>
            <person name="Kobayashi A."/>
            <person name="Larionov V."/>
            <person name="Leem S.-H."/>
            <person name="Lopez F."/>
            <person name="Lou Y."/>
            <person name="Lowry S."/>
            <person name="Malfatti S."/>
            <person name="Martinez D."/>
            <person name="McCready P.M."/>
            <person name="Medina C."/>
            <person name="Morgan J."/>
            <person name="Nelson K."/>
            <person name="Nolan M."/>
            <person name="Ovcharenko I."/>
            <person name="Pitluck S."/>
            <person name="Pollard M."/>
            <person name="Popkie A.P."/>
            <person name="Predki P."/>
            <person name="Quan G."/>
            <person name="Ramirez L."/>
            <person name="Rash S."/>
            <person name="Retterer J."/>
            <person name="Rodriguez A."/>
            <person name="Rogers S."/>
            <person name="Salamov A."/>
            <person name="Salazar A."/>
            <person name="She X."/>
            <person name="Smith D."/>
            <person name="Slezak T."/>
            <person name="Solovyev V."/>
            <person name="Thayer N."/>
            <person name="Tice H."/>
            <person name="Tsai M."/>
            <person name="Ustaszewska A."/>
            <person name="Vo N."/>
            <person name="Wagner M."/>
            <person name="Wheeler J."/>
            <person name="Wu K."/>
            <person name="Xie G."/>
            <person name="Yang J."/>
            <person name="Dubchak I."/>
            <person name="Furey T.S."/>
            <person name="DeJong P."/>
            <person name="Dickson M."/>
            <person name="Gordon D."/>
            <person name="Eichler E.E."/>
            <person name="Pennacchio L.A."/>
            <person name="Richardson P."/>
            <person name="Stubbs L."/>
            <person name="Rokhsar D.S."/>
            <person name="Myers R.M."/>
            <person name="Rubin E.M."/>
            <person name="Lucas S.M."/>
        </authorList>
    </citation>
    <scope>NUCLEOTIDE SEQUENCE [LARGE SCALE GENOMIC DNA]</scope>
</reference>
<reference key="4">
    <citation type="journal article" date="2004" name="Genome Res.">
        <title>The status, quality, and expansion of the NIH full-length cDNA project: the Mammalian Gene Collection (MGC).</title>
        <authorList>
            <consortium name="The MGC Project Team"/>
        </authorList>
    </citation>
    <scope>NUCLEOTIDE SEQUENCE [LARGE SCALE MRNA] (ISOFORM 2)</scope>
    <source>
        <tissue>Placenta</tissue>
    </source>
</reference>
<reference key="5">
    <citation type="journal article" date="2002" name="J. Biol. Chem.">
        <title>Dual-substrate specificity short chain retinol dehydrogenases from the vertebrate retina.</title>
        <authorList>
            <person name="Haeseleer F."/>
            <person name="Jang G.-F."/>
            <person name="Imanishi Y."/>
            <person name="Driessen C.A.G.G."/>
            <person name="Matsumura M."/>
            <person name="Nelson P.S."/>
            <person name="Palczewski K."/>
        </authorList>
    </citation>
    <scope>TISSUE SPECIFICITY</scope>
    <scope>CAUTION</scope>
</reference>
<reference key="6">
    <citation type="journal article" date="2011" name="BMC Syst. Biol.">
        <title>Initial characterization of the human central proteome.</title>
        <authorList>
            <person name="Burkard T.R."/>
            <person name="Planyavsky M."/>
            <person name="Kaupe I."/>
            <person name="Breitwieser F.P."/>
            <person name="Buerckstuemmer T."/>
            <person name="Bennett K.L."/>
            <person name="Superti-Furga G."/>
            <person name="Colinge J."/>
        </authorList>
    </citation>
    <scope>IDENTIFICATION BY MASS SPECTROMETRY [LARGE SCALE ANALYSIS]</scope>
</reference>
<reference key="7">
    <citation type="journal article" date="2013" name="J. Proteome Res.">
        <title>Toward a comprehensive characterization of a human cancer cell phosphoproteome.</title>
        <authorList>
            <person name="Zhou H."/>
            <person name="Di Palma S."/>
            <person name="Preisinger C."/>
            <person name="Peng M."/>
            <person name="Polat A.N."/>
            <person name="Heck A.J."/>
            <person name="Mohammed S."/>
        </authorList>
    </citation>
    <scope>PHOSPHORYLATION [LARGE SCALE ANALYSIS] AT SER-323</scope>
    <scope>IDENTIFICATION BY MASS SPECTROMETRY [LARGE SCALE ANALYSIS]</scope>
    <source>
        <tissue>Erythroleukemia</tissue>
    </source>
</reference>
<reference key="8">
    <citation type="journal article" date="2014" name="J. Proteomics">
        <title>An enzyme assisted RP-RPLC approach for in-depth analysis of human liver phosphoproteome.</title>
        <authorList>
            <person name="Bian Y."/>
            <person name="Song C."/>
            <person name="Cheng K."/>
            <person name="Dong M."/>
            <person name="Wang F."/>
            <person name="Huang J."/>
            <person name="Sun D."/>
            <person name="Wang L."/>
            <person name="Ye M."/>
            <person name="Zou H."/>
        </authorList>
    </citation>
    <scope>IDENTIFICATION BY MASS SPECTROMETRY [LARGE SCALE ANALYSIS]</scope>
    <source>
        <tissue>Liver</tissue>
    </source>
</reference>
<reference key="9">
    <citation type="journal article" date="2015" name="Proteomics">
        <title>N-terminome analysis of the human mitochondrial proteome.</title>
        <authorList>
            <person name="Vaca Jacome A.S."/>
            <person name="Rabilloud T."/>
            <person name="Schaeffer-Reiss C."/>
            <person name="Rompais M."/>
            <person name="Ayoub D."/>
            <person name="Lane L."/>
            <person name="Bairoch A."/>
            <person name="Van Dorsselaer A."/>
            <person name="Carapito C."/>
        </authorList>
    </citation>
    <scope>ACETYLATION [LARGE SCALE ANALYSIS] AT SER-2</scope>
    <scope>CLEAVAGE OF INITIATOR METHIONINE [LARGE SCALE ANALYSIS]</scope>
    <scope>IDENTIFICATION BY MASS SPECTROMETRY [LARGE SCALE ANALYSIS]</scope>
</reference>
<reference key="10">
    <citation type="journal article" date="2008" name="FEBS J.">
        <title>Human retinol dehydrogenase 13 (RDH13) is a mitochondrial short-chain dehydrogenase/reductase with a retinaldehyde reductase activity.</title>
        <authorList>
            <person name="Belyaeva O.V."/>
            <person name="Korkina O.V."/>
            <person name="Stetsenko A.V."/>
            <person name="Kedishvili N.Y."/>
        </authorList>
    </citation>
    <scope>TISSUE SPECIFICITY</scope>
    <scope>SUBCELLULAR LOCATION</scope>
    <scope>CATALYTIC ACTIVITY</scope>
    <scope>BIOPHYSICOCHEMICAL PROPERTIES</scope>
</reference>
<dbReference type="EC" id="1.1.1.300" evidence="6"/>
<dbReference type="EMBL" id="AY358473">
    <property type="protein sequence ID" value="AAQ88837.1"/>
    <property type="molecule type" value="mRNA"/>
</dbReference>
<dbReference type="EMBL" id="AK075392">
    <property type="protein sequence ID" value="BAC11591.1"/>
    <property type="molecule type" value="mRNA"/>
</dbReference>
<dbReference type="EMBL" id="AC011476">
    <property type="status" value="NOT_ANNOTATED_CDS"/>
    <property type="molecule type" value="Genomic_DNA"/>
</dbReference>
<dbReference type="EMBL" id="BC009881">
    <property type="protein sequence ID" value="AAH09881.1"/>
    <property type="molecule type" value="mRNA"/>
</dbReference>
<dbReference type="CCDS" id="CCDS42627.1">
    <molecule id="Q8NBN7-2"/>
</dbReference>
<dbReference type="CCDS" id="CCDS54320.1">
    <molecule id="Q8NBN7-1"/>
</dbReference>
<dbReference type="RefSeq" id="NP_001139443.1">
    <molecule id="Q8NBN7-1"/>
    <property type="nucleotide sequence ID" value="NM_001145971.2"/>
</dbReference>
<dbReference type="RefSeq" id="NP_612421.1">
    <molecule id="Q8NBN7-2"/>
    <property type="nucleotide sequence ID" value="NM_138412.4"/>
</dbReference>
<dbReference type="RefSeq" id="XP_005258530.1">
    <property type="nucleotide sequence ID" value="XM_005258473.1"/>
</dbReference>
<dbReference type="RefSeq" id="XP_011524709.1">
    <property type="nucleotide sequence ID" value="XM_011526407.1"/>
</dbReference>
<dbReference type="RefSeq" id="XP_054175658.1">
    <molecule id="Q8NBN7-1"/>
    <property type="nucleotide sequence ID" value="XM_054319683.1"/>
</dbReference>
<dbReference type="RefSeq" id="XP_054175659.1">
    <molecule id="Q8NBN7-1"/>
    <property type="nucleotide sequence ID" value="XM_054319684.1"/>
</dbReference>
<dbReference type="RefSeq" id="XP_054175660.1">
    <molecule id="Q8NBN7-1"/>
    <property type="nucleotide sequence ID" value="XM_054319685.1"/>
</dbReference>
<dbReference type="RefSeq" id="XP_054175661.1">
    <molecule id="Q8NBN7-1"/>
    <property type="nucleotide sequence ID" value="XM_054319686.1"/>
</dbReference>
<dbReference type="RefSeq" id="XP_054185625.1">
    <molecule id="Q8NBN7-1"/>
    <property type="nucleotide sequence ID" value="XM_054329650.1"/>
</dbReference>
<dbReference type="RefSeq" id="XP_054185626.1">
    <molecule id="Q8NBN7-1"/>
    <property type="nucleotide sequence ID" value="XM_054329651.1"/>
</dbReference>
<dbReference type="RefSeq" id="XP_054185627.1">
    <molecule id="Q8NBN7-1"/>
    <property type="nucleotide sequence ID" value="XM_054329652.1"/>
</dbReference>
<dbReference type="RefSeq" id="XP_054185628.1">
    <molecule id="Q8NBN7-1"/>
    <property type="nucleotide sequence ID" value="XM_054329653.1"/>
</dbReference>
<dbReference type="RefSeq" id="XP_054185629.1">
    <molecule id="Q8NBN7-1"/>
    <property type="nucleotide sequence ID" value="XM_054329654.1"/>
</dbReference>
<dbReference type="RefSeq" id="XP_054186112.1">
    <molecule id="Q8NBN7-1"/>
    <property type="nucleotide sequence ID" value="XM_054330137.1"/>
</dbReference>
<dbReference type="RefSeq" id="XP_054186113.1">
    <molecule id="Q8NBN7-1"/>
    <property type="nucleotide sequence ID" value="XM_054330138.1"/>
</dbReference>
<dbReference type="RefSeq" id="XP_054186114.1">
    <molecule id="Q8NBN7-1"/>
    <property type="nucleotide sequence ID" value="XM_054330139.1"/>
</dbReference>
<dbReference type="RefSeq" id="XP_054186115.1">
    <molecule id="Q8NBN7-1"/>
    <property type="nucleotide sequence ID" value="XM_054330140.1"/>
</dbReference>
<dbReference type="RefSeq" id="XP_054186116.1">
    <molecule id="Q8NBN7-1"/>
    <property type="nucleotide sequence ID" value="XM_054330141.1"/>
</dbReference>
<dbReference type="RefSeq" id="XP_054186426.1">
    <molecule id="Q8NBN7-1"/>
    <property type="nucleotide sequence ID" value="XM_054330451.1"/>
</dbReference>
<dbReference type="RefSeq" id="XP_054186427.1">
    <molecule id="Q8NBN7-1"/>
    <property type="nucleotide sequence ID" value="XM_054330452.1"/>
</dbReference>
<dbReference type="RefSeq" id="XP_054186428.1">
    <molecule id="Q8NBN7-1"/>
    <property type="nucleotide sequence ID" value="XM_054330453.1"/>
</dbReference>
<dbReference type="RefSeq" id="XP_054186429.1">
    <molecule id="Q8NBN7-1"/>
    <property type="nucleotide sequence ID" value="XM_054330454.1"/>
</dbReference>
<dbReference type="RefSeq" id="XP_054186680.1">
    <molecule id="Q8NBN7-1"/>
    <property type="nucleotide sequence ID" value="XM_054330705.1"/>
</dbReference>
<dbReference type="RefSeq" id="XP_054186681.1">
    <molecule id="Q8NBN7-1"/>
    <property type="nucleotide sequence ID" value="XM_054330706.1"/>
</dbReference>
<dbReference type="RefSeq" id="XP_054186682.1">
    <molecule id="Q8NBN7-1"/>
    <property type="nucleotide sequence ID" value="XM_054330707.1"/>
</dbReference>
<dbReference type="RefSeq" id="XP_054186910.1">
    <molecule id="Q8NBN7-1"/>
    <property type="nucleotide sequence ID" value="XM_054330935.1"/>
</dbReference>
<dbReference type="RefSeq" id="XP_054186911.1">
    <molecule id="Q8NBN7-1"/>
    <property type="nucleotide sequence ID" value="XM_054330936.1"/>
</dbReference>
<dbReference type="RefSeq" id="XP_054186912.1">
    <molecule id="Q8NBN7-1"/>
    <property type="nucleotide sequence ID" value="XM_054330937.1"/>
</dbReference>
<dbReference type="RefSeq" id="XP_054186913.1">
    <molecule id="Q8NBN7-1"/>
    <property type="nucleotide sequence ID" value="XM_054330938.1"/>
</dbReference>
<dbReference type="RefSeq" id="XP_054187188.1">
    <molecule id="Q8NBN7-1"/>
    <property type="nucleotide sequence ID" value="XM_054331213.1"/>
</dbReference>
<dbReference type="RefSeq" id="XP_054187189.1">
    <molecule id="Q8NBN7-1"/>
    <property type="nucleotide sequence ID" value="XM_054331214.1"/>
</dbReference>
<dbReference type="RefSeq" id="XP_054187190.1">
    <molecule id="Q8NBN7-1"/>
    <property type="nucleotide sequence ID" value="XM_054331215.1"/>
</dbReference>
<dbReference type="RefSeq" id="XP_054187191.1">
    <molecule id="Q8NBN7-1"/>
    <property type="nucleotide sequence ID" value="XM_054331216.1"/>
</dbReference>
<dbReference type="RefSeq" id="XP_054187452.1">
    <molecule id="Q8NBN7-1"/>
    <property type="nucleotide sequence ID" value="XM_054331477.1"/>
</dbReference>
<dbReference type="RefSeq" id="XP_054187453.1">
    <molecule id="Q8NBN7-1"/>
    <property type="nucleotide sequence ID" value="XM_054331478.1"/>
</dbReference>
<dbReference type="RefSeq" id="XP_054187454.1">
    <molecule id="Q8NBN7-1"/>
    <property type="nucleotide sequence ID" value="XM_054331479.1"/>
</dbReference>
<dbReference type="RefSeq" id="XP_054187455.1">
    <molecule id="Q8NBN7-1"/>
    <property type="nucleotide sequence ID" value="XM_054331480.1"/>
</dbReference>
<dbReference type="RefSeq" id="XP_054189499.1">
    <molecule id="Q8NBN7-1"/>
    <property type="nucleotide sequence ID" value="XM_054333524.1"/>
</dbReference>
<dbReference type="RefSeq" id="XP_054189500.1">
    <molecule id="Q8NBN7-1"/>
    <property type="nucleotide sequence ID" value="XM_054333525.1"/>
</dbReference>
<dbReference type="RefSeq" id="XP_054189501.1">
    <molecule id="Q8NBN7-1"/>
    <property type="nucleotide sequence ID" value="XM_054333526.1"/>
</dbReference>
<dbReference type="RefSeq" id="XP_054189502.1">
    <molecule id="Q8NBN7-1"/>
    <property type="nucleotide sequence ID" value="XM_054333527.1"/>
</dbReference>
<dbReference type="RefSeq" id="XP_054189588.1">
    <molecule id="Q8NBN7-1"/>
    <property type="nucleotide sequence ID" value="XM_054333613.1"/>
</dbReference>
<dbReference type="RefSeq" id="XP_054189589.1">
    <molecule id="Q8NBN7-1"/>
    <property type="nucleotide sequence ID" value="XM_054333614.1"/>
</dbReference>
<dbReference type="RefSeq" id="XP_054189590.1">
    <molecule id="Q8NBN7-1"/>
    <property type="nucleotide sequence ID" value="XM_054333615.1"/>
</dbReference>
<dbReference type="RefSeq" id="XP_054189591.1">
    <molecule id="Q8NBN7-1"/>
    <property type="nucleotide sequence ID" value="XM_054333616.1"/>
</dbReference>
<dbReference type="SMR" id="Q8NBN7"/>
<dbReference type="BioGRID" id="125200">
    <property type="interactions" value="97"/>
</dbReference>
<dbReference type="FunCoup" id="Q8NBN7">
    <property type="interactions" value="830"/>
</dbReference>
<dbReference type="IntAct" id="Q8NBN7">
    <property type="interactions" value="59"/>
</dbReference>
<dbReference type="MINT" id="Q8NBN7"/>
<dbReference type="STRING" id="9606.ENSP00000391121"/>
<dbReference type="DrugBank" id="DB00162">
    <property type="generic name" value="Vitamin A"/>
</dbReference>
<dbReference type="DrugCentral" id="Q8NBN7"/>
<dbReference type="SwissLipids" id="SLP:000001877"/>
<dbReference type="GlyGen" id="Q8NBN7">
    <property type="glycosylation" value="1 site, 1 O-linked glycan (1 site)"/>
</dbReference>
<dbReference type="iPTMnet" id="Q8NBN7"/>
<dbReference type="PhosphoSitePlus" id="Q8NBN7"/>
<dbReference type="SwissPalm" id="Q8NBN7"/>
<dbReference type="BioMuta" id="RDH13"/>
<dbReference type="DMDM" id="62298570"/>
<dbReference type="jPOST" id="Q8NBN7"/>
<dbReference type="MassIVE" id="Q8NBN7"/>
<dbReference type="PaxDb" id="9606-ENSP00000391121"/>
<dbReference type="PeptideAtlas" id="Q8NBN7"/>
<dbReference type="ProteomicsDB" id="72802">
    <molecule id="Q8NBN7-1"/>
</dbReference>
<dbReference type="ProteomicsDB" id="72803">
    <molecule id="Q8NBN7-2"/>
</dbReference>
<dbReference type="Pumba" id="Q8NBN7"/>
<dbReference type="Antibodypedia" id="32994">
    <property type="antibodies" value="135 antibodies from 20 providers"/>
</dbReference>
<dbReference type="DNASU" id="112724"/>
<dbReference type="Ensembl" id="ENST00000396247.7">
    <molecule id="Q8NBN7-2"/>
    <property type="protein sequence ID" value="ENSP00000379547.2"/>
    <property type="gene ID" value="ENSG00000160439.16"/>
</dbReference>
<dbReference type="Ensembl" id="ENST00000415061.8">
    <molecule id="Q8NBN7-1"/>
    <property type="protein sequence ID" value="ENSP00000391121.2"/>
    <property type="gene ID" value="ENSG00000160439.16"/>
</dbReference>
<dbReference type="Ensembl" id="ENST00000610356.4">
    <molecule id="Q8NBN7-2"/>
    <property type="protein sequence ID" value="ENSP00000477732.1"/>
    <property type="gene ID" value="ENSG00000160439.16"/>
</dbReference>
<dbReference type="Ensembl" id="ENST00000613257.1">
    <molecule id="Q8NBN7-2"/>
    <property type="protein sequence ID" value="ENSP00000479552.1"/>
    <property type="gene ID" value="ENSG00000276341.1"/>
</dbReference>
<dbReference type="Ensembl" id="ENST00000613935.1">
    <molecule id="Q8NBN7-2"/>
    <property type="protein sequence ID" value="ENSP00000482809.1"/>
    <property type="gene ID" value="ENSG00000274504.1"/>
</dbReference>
<dbReference type="Ensembl" id="ENST00000615256.4">
    <molecule id="Q8NBN7-1"/>
    <property type="protein sequence ID" value="ENSP00000477512.1"/>
    <property type="gene ID" value="ENSG00000276684.4"/>
</dbReference>
<dbReference type="Ensembl" id="ENST00000615688.1">
    <molecule id="Q8NBN7-2"/>
    <property type="protein sequence ID" value="ENSP00000482782.1"/>
    <property type="gene ID" value="ENSG00000275474.1"/>
</dbReference>
<dbReference type="Ensembl" id="ENST00000616348.1">
    <molecule id="Q8NBN7-2"/>
    <property type="protein sequence ID" value="ENSP00000477884.1"/>
    <property type="gene ID" value="ENSG00000276826.1"/>
</dbReference>
<dbReference type="Ensembl" id="ENST00000620423.1">
    <molecule id="Q8NBN7-2"/>
    <property type="protein sequence ID" value="ENSP00000482051.1"/>
    <property type="gene ID" value="ENSG00000278149.1"/>
</dbReference>
<dbReference type="Ensembl" id="ENST00000621614.4">
    <molecule id="Q8NBN7-2"/>
    <property type="protein sequence ID" value="ENSP00000484637.1"/>
    <property type="gene ID" value="ENSG00000276684.4"/>
</dbReference>
<dbReference type="Ensembl" id="ENST00000621849.1">
    <molecule id="Q8NBN7-2"/>
    <property type="protein sequence ID" value="ENSP00000480095.1"/>
    <property type="gene ID" value="ENSG00000273944.1"/>
</dbReference>
<dbReference type="Ensembl" id="ENST00000622200.1">
    <molecule id="Q8NBN7-2"/>
    <property type="protein sequence ID" value="ENSP00000484111.1"/>
    <property type="gene ID" value="ENSG00000274418.1"/>
</dbReference>
<dbReference type="Ensembl" id="ENST00000622572.1">
    <molecule id="Q8NBN7-2"/>
    <property type="protein sequence ID" value="ENSP00000484246.1"/>
    <property type="gene ID" value="ENSG00000278284.1"/>
</dbReference>
<dbReference type="GeneID" id="112724"/>
<dbReference type="KEGG" id="hsa:112724"/>
<dbReference type="MANE-Select" id="ENST00000415061.8">
    <property type="protein sequence ID" value="ENSP00000391121.2"/>
    <property type="RefSeq nucleotide sequence ID" value="NM_001145971.2"/>
    <property type="RefSeq protein sequence ID" value="NP_001139443.1"/>
</dbReference>
<dbReference type="UCSC" id="uc002qio.4">
    <molecule id="Q8NBN7-1"/>
    <property type="organism name" value="human"/>
</dbReference>
<dbReference type="AGR" id="HGNC:19978"/>
<dbReference type="CTD" id="112724"/>
<dbReference type="DisGeNET" id="112724"/>
<dbReference type="GeneCards" id="RDH13"/>
<dbReference type="HGNC" id="HGNC:19978">
    <property type="gene designation" value="RDH13"/>
</dbReference>
<dbReference type="HPA" id="ENSG00000160439">
    <property type="expression patterns" value="Low tissue specificity"/>
</dbReference>
<dbReference type="neXtProt" id="NX_Q8NBN7"/>
<dbReference type="OpenTargets" id="ENSG00000160439"/>
<dbReference type="PharmGKB" id="PA134897935"/>
<dbReference type="VEuPathDB" id="HostDB:ENSG00000160439"/>
<dbReference type="eggNOG" id="KOG1208">
    <property type="taxonomic scope" value="Eukaryota"/>
</dbReference>
<dbReference type="GeneTree" id="ENSGT00940000159641"/>
<dbReference type="HOGENOM" id="CLU_010194_44_5_1"/>
<dbReference type="InParanoid" id="Q8NBN7"/>
<dbReference type="OMA" id="LMCATEP"/>
<dbReference type="OrthoDB" id="191139at2759"/>
<dbReference type="PAN-GO" id="Q8NBN7">
    <property type="GO annotations" value="3 GO annotations based on evolutionary models"/>
</dbReference>
<dbReference type="PhylomeDB" id="Q8NBN7"/>
<dbReference type="TreeFam" id="TF105429"/>
<dbReference type="BRENDA" id="1.1.1.300">
    <property type="organism ID" value="2681"/>
</dbReference>
<dbReference type="PathwayCommons" id="Q8NBN7"/>
<dbReference type="Reactome" id="R-HSA-5365859">
    <property type="pathway name" value="RA biosynthesis pathway"/>
</dbReference>
<dbReference type="SignaLink" id="Q8NBN7"/>
<dbReference type="UniPathway" id="UPA00912"/>
<dbReference type="BioGRID-ORCS" id="112724">
    <property type="hits" value="10 hits in 1154 CRISPR screens"/>
</dbReference>
<dbReference type="ChiTaRS" id="RDH13">
    <property type="organism name" value="human"/>
</dbReference>
<dbReference type="GenomeRNAi" id="112724"/>
<dbReference type="Pharos" id="Q8NBN7">
    <property type="development level" value="Tbio"/>
</dbReference>
<dbReference type="PRO" id="PR:Q8NBN7"/>
<dbReference type="Proteomes" id="UP000005640">
    <property type="component" value="Chromosome 19"/>
</dbReference>
<dbReference type="RNAct" id="Q8NBN7">
    <property type="molecule type" value="protein"/>
</dbReference>
<dbReference type="Bgee" id="ENSG00000160439">
    <property type="expression patterns" value="Expressed in lower esophagus mucosa and 97 other cell types or tissues"/>
</dbReference>
<dbReference type="ExpressionAtlas" id="Q8NBN7">
    <property type="expression patterns" value="baseline and differential"/>
</dbReference>
<dbReference type="GO" id="GO:0005743">
    <property type="term" value="C:mitochondrial inner membrane"/>
    <property type="evidence" value="ECO:0000314"/>
    <property type="project" value="UniProtKB"/>
</dbReference>
<dbReference type="GO" id="GO:0005739">
    <property type="term" value="C:mitochondrion"/>
    <property type="evidence" value="ECO:0006056"/>
    <property type="project" value="FlyBase"/>
</dbReference>
<dbReference type="GO" id="GO:0052650">
    <property type="term" value="F:all-trans-retinol dehydrogenase (NADP+) activity"/>
    <property type="evidence" value="ECO:0000314"/>
    <property type="project" value="UniProtKB"/>
</dbReference>
<dbReference type="GO" id="GO:0042462">
    <property type="term" value="P:eye photoreceptor cell development"/>
    <property type="evidence" value="ECO:0007669"/>
    <property type="project" value="Ensembl"/>
</dbReference>
<dbReference type="GO" id="GO:0009644">
    <property type="term" value="P:response to high light intensity"/>
    <property type="evidence" value="ECO:0007669"/>
    <property type="project" value="Ensembl"/>
</dbReference>
<dbReference type="GO" id="GO:0010842">
    <property type="term" value="P:retina layer formation"/>
    <property type="evidence" value="ECO:0007669"/>
    <property type="project" value="Ensembl"/>
</dbReference>
<dbReference type="GO" id="GO:0042574">
    <property type="term" value="P:retinal metabolic process"/>
    <property type="evidence" value="ECO:0000314"/>
    <property type="project" value="UniProtKB"/>
</dbReference>
<dbReference type="CDD" id="cd09807">
    <property type="entry name" value="retinol-DH_like_SDR_c"/>
    <property type="match status" value="1"/>
</dbReference>
<dbReference type="FunFam" id="3.40.50.720:FF:000145">
    <property type="entry name" value="Retinol dehydrogenase 12"/>
    <property type="match status" value="1"/>
</dbReference>
<dbReference type="Gene3D" id="3.40.50.720">
    <property type="entry name" value="NAD(P)-binding Rossmann-like Domain"/>
    <property type="match status" value="1"/>
</dbReference>
<dbReference type="InterPro" id="IPR036291">
    <property type="entry name" value="NAD(P)-bd_dom_sf"/>
</dbReference>
<dbReference type="InterPro" id="IPR020904">
    <property type="entry name" value="Sc_DH/Rdtase_CS"/>
</dbReference>
<dbReference type="InterPro" id="IPR002347">
    <property type="entry name" value="SDR_fam"/>
</dbReference>
<dbReference type="NCBIfam" id="NF004846">
    <property type="entry name" value="PRK06197.1"/>
    <property type="match status" value="1"/>
</dbReference>
<dbReference type="PANTHER" id="PTHR43157">
    <property type="entry name" value="PHOSPHATIDYLINOSITOL-GLYCAN BIOSYNTHESIS CLASS F PROTEIN-RELATED"/>
    <property type="match status" value="1"/>
</dbReference>
<dbReference type="PANTHER" id="PTHR43157:SF59">
    <property type="entry name" value="RETINOL DEHYDROGENASE 13"/>
    <property type="match status" value="1"/>
</dbReference>
<dbReference type="Pfam" id="PF00106">
    <property type="entry name" value="adh_short"/>
    <property type="match status" value="1"/>
</dbReference>
<dbReference type="PRINTS" id="PR00081">
    <property type="entry name" value="GDHRDH"/>
</dbReference>
<dbReference type="PRINTS" id="PR00080">
    <property type="entry name" value="SDRFAMILY"/>
</dbReference>
<dbReference type="SUPFAM" id="SSF51735">
    <property type="entry name" value="NAD(P)-binding Rossmann-fold domains"/>
    <property type="match status" value="1"/>
</dbReference>
<dbReference type="PROSITE" id="PS00061">
    <property type="entry name" value="ADH_SHORT"/>
    <property type="match status" value="1"/>
</dbReference>
<protein>
    <recommendedName>
        <fullName evidence="8">Retinol dehydrogenase 13</fullName>
        <ecNumber evidence="6">1.1.1.300</ecNumber>
    </recommendedName>
    <alternativeName>
        <fullName>Short chain dehydrogenase/reductase family 7C member 3</fullName>
    </alternativeName>
</protein>
<sequence>MSRYLLPLSALGTVAGAAVLLKDYVTGGACPSKATIPGKTVIVTGANTGIGKQTALELARRGGNIILACRDMEKCEAAAKDIRGETLNHHVNARHLDLASLKSIREFAAKIIEEEERVDILINNAGVMRCPHWTTEDGFEMQFGVNHLGHFLLTNLLLDKLKASAPSRIINLSSLAHVAGHIDFDDLNWQTRKYNTKAAYCQSKLAIVLFTKELSRRLQGSGVTVNALHPGVARTELGRHTGIHGSTFSSTTLGPIFWLLVKSPELAAQPSTYLAVAEELADVSGKYFDGLKQKAPAPEAEDEEVARRLWAESARLVGLEAPSVREQPLPR</sequence>
<accession>Q8NBN7</accession>
<accession>Q6UX79</accession>
<accession>Q96G88</accession>
<name>RDH13_HUMAN</name>
<evidence type="ECO:0000250" key="1"/>
<evidence type="ECO:0000250" key="2">
    <source>
        <dbReference type="UniProtKB" id="Q8WNV7"/>
    </source>
</evidence>
<evidence type="ECO:0000250" key="3">
    <source>
        <dbReference type="UniProtKB" id="Q9ERI6"/>
    </source>
</evidence>
<evidence type="ECO:0000255" key="4">
    <source>
        <dbReference type="PROSITE-ProRule" id="PRU10001"/>
    </source>
</evidence>
<evidence type="ECO:0000269" key="5">
    <source>
    </source>
</evidence>
<evidence type="ECO:0000269" key="6">
    <source>
    </source>
</evidence>
<evidence type="ECO:0000303" key="7">
    <source>
    </source>
</evidence>
<evidence type="ECO:0000305" key="8"/>
<evidence type="ECO:0007744" key="9">
    <source>
    </source>
</evidence>
<evidence type="ECO:0007744" key="10">
    <source>
    </source>
</evidence>
<organism>
    <name type="scientific">Homo sapiens</name>
    <name type="common">Human</name>
    <dbReference type="NCBI Taxonomy" id="9606"/>
    <lineage>
        <taxon>Eukaryota</taxon>
        <taxon>Metazoa</taxon>
        <taxon>Chordata</taxon>
        <taxon>Craniata</taxon>
        <taxon>Vertebrata</taxon>
        <taxon>Euteleostomi</taxon>
        <taxon>Mammalia</taxon>
        <taxon>Eutheria</taxon>
        <taxon>Euarchontoglires</taxon>
        <taxon>Primates</taxon>
        <taxon>Haplorrhini</taxon>
        <taxon>Catarrhini</taxon>
        <taxon>Hominidae</taxon>
        <taxon>Homo</taxon>
    </lineage>
</organism>
<gene>
    <name type="primary">RDH13</name>
    <name type="synonym">SDR7C3</name>
    <name type="ORF">PSEC0082</name>
    <name type="ORF">UNQ736/PRO1430</name>
</gene>
<feature type="initiator methionine" description="Removed" evidence="10">
    <location>
        <position position="1"/>
    </location>
</feature>
<feature type="chain" id="PRO_0000054768" description="Retinol dehydrogenase 13">
    <location>
        <begin position="2"/>
        <end position="331"/>
    </location>
</feature>
<feature type="active site" description="Proton acceptor" evidence="2 4">
    <location>
        <position position="200"/>
    </location>
</feature>
<feature type="binding site" evidence="1">
    <location>
        <begin position="45"/>
        <end position="51"/>
    </location>
    <ligand>
        <name>NADP(+)</name>
        <dbReference type="ChEBI" id="CHEBI:58349"/>
    </ligand>
</feature>
<feature type="binding site" evidence="1">
    <location>
        <position position="174"/>
    </location>
    <ligand>
        <name>substrate</name>
    </ligand>
</feature>
<feature type="modified residue" description="N-acetylserine" evidence="10">
    <location>
        <position position="2"/>
    </location>
</feature>
<feature type="modified residue" description="Phosphoserine" evidence="9">
    <location>
        <position position="323"/>
    </location>
</feature>
<feature type="splice variant" id="VSP_040383" description="In isoform 2." evidence="7">
    <location>
        <begin position="1"/>
        <end position="71"/>
    </location>
</feature>
<feature type="sequence conflict" description="In Ref. 2; BAC11591." evidence="8" ref="2">
    <original>E</original>
    <variation>V</variation>
    <location>
        <position position="106"/>
    </location>
</feature>
<proteinExistence type="evidence at protein level"/>